<sequence>MARLRSMVQAGVARVEGFGLAGFSDEELYAIHTSTLEVLEYTGLKIESQEALEIFSEGGARVDFKTKVVKIPQYLVEDAIQSAPSTLVLAGRNPKNDIVLGGKRVGFINFGEGVSIIDPYTKEYRKTTRRDVANITRFCDAMDQMDAVLRPVAPQDIHPSVAVVHNAEVIFNNTSKHVFIGVEGGRNFKKVLKMAAAVAGGEDKLRERPLFSCNICPTSPLQIVNHASEVIIEGARAGIPVNMLSMGMSGATSAITLAGTLVTHNCEVLGAIVLSQLTSKGAPVLYGSSTTIMDMKNMTAPVGSPELGMINAGVAKLAQYYNLPSWVAGGOVDSKIPDAQASHEFTLTGFLTALAGANLIYGAGMLELGITFDYAQMLMDNEMARMIKKAVGGISVTDETLAVDVIKSVGTAGNFISEDHTYAHMRTQSQSKLVDRSMRENWLAAGAKDFTQRAYEEAISILENYTPEPLPEKIAATLRSIVEETEDEYGVARSLI</sequence>
<protein>
    <recommendedName>
        <fullName>Trimethylamine methyltransferase MttB</fullName>
        <shortName>TMA methyltransferase</shortName>
        <ecNumber>2.1.1.250</ecNumber>
    </recommendedName>
    <alternativeName>
        <fullName>Trimethylamine--corrinoid protein methyltransferase</fullName>
    </alternativeName>
</protein>
<feature type="chain" id="PRO_0000249588" description="Trimethylamine methyltransferase MttB">
    <location>
        <begin position="1"/>
        <end position="496"/>
    </location>
</feature>
<feature type="non-standard amino acid" description="Pyrrolysine" evidence="1">
    <location>
        <position position="331"/>
    </location>
</feature>
<reference key="1">
    <citation type="journal article" date="2012" name="BMC Microbiol.">
        <title>Genome sequence of Desulfitobacterium hafniense DCB-2, a Gram-positive anaerobe capable of dehalogenation and metal reduction.</title>
        <authorList>
            <person name="Kim S.H."/>
            <person name="Harzman C."/>
            <person name="Davis J.K."/>
            <person name="Hutcheson R."/>
            <person name="Broderick J.B."/>
            <person name="Marsh T.L."/>
            <person name="Tiedje J.M."/>
        </authorList>
    </citation>
    <scope>NUCLEOTIDE SEQUENCE [LARGE SCALE GENOMIC DNA]</scope>
    <source>
        <strain>DSM 10664 / DCB-2</strain>
    </source>
</reference>
<evidence type="ECO:0000250" key="1"/>
<evidence type="ECO:0000305" key="2"/>
<organism>
    <name type="scientific">Desulfitobacterium hafniense (strain DSM 10664 / DCB-2)</name>
    <dbReference type="NCBI Taxonomy" id="272564"/>
    <lineage>
        <taxon>Bacteria</taxon>
        <taxon>Bacillati</taxon>
        <taxon>Bacillota</taxon>
        <taxon>Clostridia</taxon>
        <taxon>Eubacteriales</taxon>
        <taxon>Desulfitobacteriaceae</taxon>
        <taxon>Desulfitobacterium</taxon>
    </lineage>
</organism>
<gene>
    <name type="ordered locus">Dhaf_4869</name>
</gene>
<comment type="function">
    <text evidence="1">Catalyzes the transfer of a methyl group from trimethylamine to the corrinoid cofactor of MttC.</text>
</comment>
<comment type="catalytic activity">
    <reaction>
        <text>Co(I)-[trimethylamine-specific corrinoid protein] + trimethylamine + H(+) = methyl-Co(III)-[trimethylamine-specific corrinoid protein] + dimethylamine</text>
        <dbReference type="Rhea" id="RHEA:39287"/>
        <dbReference type="Rhea" id="RHEA-COMP:11124"/>
        <dbReference type="Rhea" id="RHEA-COMP:11126"/>
        <dbReference type="ChEBI" id="CHEBI:15378"/>
        <dbReference type="ChEBI" id="CHEBI:58040"/>
        <dbReference type="ChEBI" id="CHEBI:58389"/>
        <dbReference type="ChEBI" id="CHEBI:85033"/>
        <dbReference type="ChEBI" id="CHEBI:85035"/>
        <dbReference type="EC" id="2.1.1.250"/>
    </reaction>
</comment>
<comment type="similarity">
    <text evidence="2">Belongs to the trimethylamine methyltransferase family.</text>
</comment>
<comment type="sequence caution" evidence="2">
    <conflict type="erroneous termination">
        <sequence resource="EMBL" id="CP001336"/>
    </conflict>
    <text>Truncated C-terminus.</text>
</comment>
<dbReference type="EC" id="2.1.1.250"/>
<dbReference type="EMBL" id="CP001336">
    <property type="status" value="NOT_ANNOTATED_CDS"/>
    <property type="molecule type" value="Genomic_DNA"/>
</dbReference>
<dbReference type="Proteomes" id="UP000007726">
    <property type="component" value="Chromosome"/>
</dbReference>
<dbReference type="GO" id="GO:0043834">
    <property type="term" value="F:trimethylamine methyltransferase activity"/>
    <property type="evidence" value="ECO:0007669"/>
    <property type="project" value="UniProtKB-EC"/>
</dbReference>
<dbReference type="GO" id="GO:0015948">
    <property type="term" value="P:methanogenesis"/>
    <property type="evidence" value="ECO:0007669"/>
    <property type="project" value="InterPro"/>
</dbReference>
<dbReference type="GO" id="GO:0032259">
    <property type="term" value="P:methylation"/>
    <property type="evidence" value="ECO:0007669"/>
    <property type="project" value="UniProtKB-KW"/>
</dbReference>
<dbReference type="Gene3D" id="3.20.20.480">
    <property type="entry name" value="Trimethylamine methyltransferase-like"/>
    <property type="match status" value="1"/>
</dbReference>
<dbReference type="InterPro" id="IPR038601">
    <property type="entry name" value="MttB-like_sf"/>
</dbReference>
<dbReference type="InterPro" id="IPR010426">
    <property type="entry name" value="MTTB_MeTrfase"/>
</dbReference>
<dbReference type="Pfam" id="PF06253">
    <property type="entry name" value="MTTB"/>
    <property type="match status" value="1"/>
</dbReference>
<dbReference type="PIRSF" id="PIRSF037567">
    <property type="entry name" value="MTTB_MeTrfase"/>
    <property type="match status" value="1"/>
</dbReference>
<proteinExistence type="inferred from homology"/>
<name>MTTB_DESHD</name>
<accession>Q18TV3</accession>
<accession>Q18TV2</accession>
<keyword id="KW-0489">Methyltransferase</keyword>
<keyword id="KW-0669">Pyrrolysine</keyword>
<keyword id="KW-0808">Transferase</keyword>